<dbReference type="EC" id="3.2.1.132"/>
<dbReference type="EMBL" id="BA000054">
    <property type="protein sequence ID" value="BAE63840.1"/>
    <property type="molecule type" value="Genomic_DNA"/>
</dbReference>
<dbReference type="PIR" id="JC7659">
    <property type="entry name" value="JC7659"/>
</dbReference>
<dbReference type="RefSeq" id="XP_001824973.1">
    <property type="nucleotide sequence ID" value="XM_001824921.1"/>
</dbReference>
<dbReference type="CAZy" id="GH75">
    <property type="family name" value="Glycoside Hydrolase Family 75"/>
</dbReference>
<dbReference type="EnsemblFungi" id="BAE63840">
    <property type="protein sequence ID" value="BAE63840"/>
    <property type="gene ID" value="AO090020000697"/>
</dbReference>
<dbReference type="GeneID" id="5997059"/>
<dbReference type="KEGG" id="aor:AO090020000697"/>
<dbReference type="VEuPathDB" id="FungiDB:AO090020000697"/>
<dbReference type="HOGENOM" id="CLU_046555_0_0_1"/>
<dbReference type="OMA" id="KLCFPNE"/>
<dbReference type="OrthoDB" id="117434at5052"/>
<dbReference type="Proteomes" id="UP000006564">
    <property type="component" value="Chromosome 6"/>
</dbReference>
<dbReference type="GO" id="GO:0005576">
    <property type="term" value="C:extracellular region"/>
    <property type="evidence" value="ECO:0007669"/>
    <property type="project" value="UniProtKB-SubCell"/>
</dbReference>
<dbReference type="GO" id="GO:0016977">
    <property type="term" value="F:chitosanase activity"/>
    <property type="evidence" value="ECO:0007669"/>
    <property type="project" value="UniProtKB-EC"/>
</dbReference>
<dbReference type="GO" id="GO:0000272">
    <property type="term" value="P:polysaccharide catabolic process"/>
    <property type="evidence" value="ECO:0007669"/>
    <property type="project" value="UniProtKB-KW"/>
</dbReference>
<dbReference type="InterPro" id="IPR009939">
    <property type="entry name" value="Chitosanase_fungal"/>
</dbReference>
<dbReference type="PANTHER" id="PTHR42061">
    <property type="entry name" value="ENDO-CHITOSANASE"/>
    <property type="match status" value="1"/>
</dbReference>
<dbReference type="PANTHER" id="PTHR42061:SF9">
    <property type="entry name" value="ENDO-CHITOSANASE"/>
    <property type="match status" value="1"/>
</dbReference>
<dbReference type="Pfam" id="PF07335">
    <property type="entry name" value="Glyco_hydro_75"/>
    <property type="match status" value="1"/>
</dbReference>
<sequence>MHFAGIVAIALATGATAYDLPENLKQIYEKHKSGKCSKELQGGYDNGHSHDGKSFSYCGDIPNAIYLHSSKNGGQYADMDIDCDGANRHAGKCSNDHSGQGETRWKDEVQKLGIDDLDANIHPYVVFGNENDDGDDPEFDPRKHGMEPLSVMAVVCNKKLFYGIWGDTNGHTATGEASLSMAELCFPEEDPSGDSGHEPNDVLYIGFTGKEAVPGKSADWKADSTESFEESIKELGDKLVAGLKA</sequence>
<organism>
    <name type="scientific">Aspergillus oryzae (strain ATCC 42149 / RIB 40)</name>
    <name type="common">Yellow koji mold</name>
    <dbReference type="NCBI Taxonomy" id="510516"/>
    <lineage>
        <taxon>Eukaryota</taxon>
        <taxon>Fungi</taxon>
        <taxon>Dikarya</taxon>
        <taxon>Ascomycota</taxon>
        <taxon>Pezizomycotina</taxon>
        <taxon>Eurotiomycetes</taxon>
        <taxon>Eurotiomycetidae</taxon>
        <taxon>Eurotiales</taxon>
        <taxon>Aspergillaceae</taxon>
        <taxon>Aspergillus</taxon>
        <taxon>Aspergillus subgen. Circumdati</taxon>
    </lineage>
</organism>
<protein>
    <recommendedName>
        <fullName>Endo-chitosanase</fullName>
        <ecNumber>3.2.1.132</ecNumber>
    </recommendedName>
</protein>
<accession>Q2U3M5</accession>
<reference key="1">
    <citation type="journal article" date="2005" name="Nature">
        <title>Genome sequencing and analysis of Aspergillus oryzae.</title>
        <authorList>
            <person name="Machida M."/>
            <person name="Asai K."/>
            <person name="Sano M."/>
            <person name="Tanaka T."/>
            <person name="Kumagai T."/>
            <person name="Terai G."/>
            <person name="Kusumoto K."/>
            <person name="Arima T."/>
            <person name="Akita O."/>
            <person name="Kashiwagi Y."/>
            <person name="Abe K."/>
            <person name="Gomi K."/>
            <person name="Horiuchi H."/>
            <person name="Kitamoto K."/>
            <person name="Kobayashi T."/>
            <person name="Takeuchi M."/>
            <person name="Denning D.W."/>
            <person name="Galagan J.E."/>
            <person name="Nierman W.C."/>
            <person name="Yu J."/>
            <person name="Archer D.B."/>
            <person name="Bennett J.W."/>
            <person name="Bhatnagar D."/>
            <person name="Cleveland T.E."/>
            <person name="Fedorova N.D."/>
            <person name="Gotoh O."/>
            <person name="Horikawa H."/>
            <person name="Hosoyama A."/>
            <person name="Ichinomiya M."/>
            <person name="Igarashi R."/>
            <person name="Iwashita K."/>
            <person name="Juvvadi P.R."/>
            <person name="Kato M."/>
            <person name="Kato Y."/>
            <person name="Kin T."/>
            <person name="Kokubun A."/>
            <person name="Maeda H."/>
            <person name="Maeyama N."/>
            <person name="Maruyama J."/>
            <person name="Nagasaki H."/>
            <person name="Nakajima T."/>
            <person name="Oda K."/>
            <person name="Okada K."/>
            <person name="Paulsen I."/>
            <person name="Sakamoto K."/>
            <person name="Sawano T."/>
            <person name="Takahashi M."/>
            <person name="Takase K."/>
            <person name="Terabayashi Y."/>
            <person name="Wortman J.R."/>
            <person name="Yamada O."/>
            <person name="Yamagata Y."/>
            <person name="Anazawa H."/>
            <person name="Hata Y."/>
            <person name="Koide Y."/>
            <person name="Komori T."/>
            <person name="Koyama Y."/>
            <person name="Minetoki T."/>
            <person name="Suharnan S."/>
            <person name="Tanaka A."/>
            <person name="Isono K."/>
            <person name="Kuhara S."/>
            <person name="Ogasawara N."/>
            <person name="Kikuchi H."/>
        </authorList>
    </citation>
    <scope>NUCLEOTIDE SEQUENCE [LARGE SCALE GENOMIC DNA]</scope>
    <source>
        <strain>ATCC 42149 / RIB 40</strain>
    </source>
</reference>
<keyword id="KW-0119">Carbohydrate metabolism</keyword>
<keyword id="KW-0326">Glycosidase</keyword>
<keyword id="KW-0378">Hydrolase</keyword>
<keyword id="KW-0624">Polysaccharide degradation</keyword>
<keyword id="KW-1185">Reference proteome</keyword>
<keyword id="KW-0964">Secreted</keyword>
<keyword id="KW-0732">Signal</keyword>
<gene>
    <name type="primary">csn</name>
    <name type="synonym">csnA</name>
    <name type="ORF">AO090020000697</name>
</gene>
<proteinExistence type="inferred from homology"/>
<comment type="function">
    <text>Chitosanase catalyzing the endo-type cleavage of chitosan, the deacylated form of chitin. Chitosanase may be crucial in the degradation of the deacetylated portion of chitin in the fungal cell wall. Chitoolisaccharides produced by the hydrolysis of partially N-acetylated chitosan are known to have many biological activities, including antibacterial activity, immune-enhancing effects, and elicitor activity.</text>
</comment>
<comment type="catalytic activity">
    <reaction>
        <text>Endohydrolysis of beta-(1-&gt;4)-linkages between D-glucosamine residues in a partly acetylated chitosan.</text>
        <dbReference type="EC" id="3.2.1.132"/>
    </reaction>
</comment>
<comment type="subcellular location">
    <subcellularLocation>
        <location evidence="1">Secreted</location>
    </subcellularLocation>
</comment>
<comment type="similarity">
    <text evidence="3">Belongs to the glycosyl hydrolase 75 family.</text>
</comment>
<evidence type="ECO:0000250" key="1"/>
<evidence type="ECO:0000255" key="2"/>
<evidence type="ECO:0000305" key="3"/>
<feature type="signal peptide" evidence="2">
    <location>
        <begin position="1"/>
        <end position="17"/>
    </location>
</feature>
<feature type="chain" id="PRO_0000429636" description="Endo-chitosanase">
    <location>
        <begin position="18"/>
        <end position="245"/>
    </location>
</feature>
<name>CSN_ASPOR</name>